<feature type="chain" id="PRO_0000096292" description="Meiotic coiled-coil protein 6">
    <location>
        <begin position="1"/>
        <end position="327"/>
    </location>
</feature>
<feature type="region of interest" description="Disordered" evidence="2">
    <location>
        <begin position="175"/>
        <end position="234"/>
    </location>
</feature>
<feature type="coiled-coil region" evidence="1">
    <location>
        <begin position="66"/>
        <end position="188"/>
    </location>
</feature>
<feature type="coiled-coil region" evidence="1">
    <location>
        <begin position="243"/>
        <end position="297"/>
    </location>
</feature>
<feature type="compositionally biased region" description="Basic and acidic residues" evidence="2">
    <location>
        <begin position="175"/>
        <end position="199"/>
    </location>
</feature>
<feature type="compositionally biased region" description="Low complexity" evidence="2">
    <location>
        <begin position="202"/>
        <end position="212"/>
    </location>
</feature>
<feature type="compositionally biased region" description="Polar residues" evidence="2">
    <location>
        <begin position="217"/>
        <end position="232"/>
    </location>
</feature>
<reference key="1">
    <citation type="journal article" date="2005" name="J. Cell Sci.">
        <title>Mcp6, a meiosis-specific coiled-coil protein of Schizosaccharomyces pombe, localizes to the spindle pole body and is required for horsetail movement and recombination.</title>
        <authorList>
            <person name="Saito T.T."/>
            <person name="Tougan T."/>
            <person name="Okuzaki D."/>
            <person name="Kasama T."/>
            <person name="Nojima H."/>
        </authorList>
    </citation>
    <scope>NUCLEOTIDE SEQUENCE [GENOMIC DNA]</scope>
    <scope>FUNCTION</scope>
    <scope>SUBCELLULAR LOCATION</scope>
</reference>
<reference key="2">
    <citation type="journal article" date="2002" name="Nature">
        <title>The genome sequence of Schizosaccharomyces pombe.</title>
        <authorList>
            <person name="Wood V."/>
            <person name="Gwilliam R."/>
            <person name="Rajandream M.A."/>
            <person name="Lyne M.H."/>
            <person name="Lyne R."/>
            <person name="Stewart A."/>
            <person name="Sgouros J.G."/>
            <person name="Peat N."/>
            <person name="Hayles J."/>
            <person name="Baker S.G."/>
            <person name="Basham D."/>
            <person name="Bowman S."/>
            <person name="Brooks K."/>
            <person name="Brown D."/>
            <person name="Brown S."/>
            <person name="Chillingworth T."/>
            <person name="Churcher C.M."/>
            <person name="Collins M."/>
            <person name="Connor R."/>
            <person name="Cronin A."/>
            <person name="Davis P."/>
            <person name="Feltwell T."/>
            <person name="Fraser A."/>
            <person name="Gentles S."/>
            <person name="Goble A."/>
            <person name="Hamlin N."/>
            <person name="Harris D.E."/>
            <person name="Hidalgo J."/>
            <person name="Hodgson G."/>
            <person name="Holroyd S."/>
            <person name="Hornsby T."/>
            <person name="Howarth S."/>
            <person name="Huckle E.J."/>
            <person name="Hunt S."/>
            <person name="Jagels K."/>
            <person name="James K.D."/>
            <person name="Jones L."/>
            <person name="Jones M."/>
            <person name="Leather S."/>
            <person name="McDonald S."/>
            <person name="McLean J."/>
            <person name="Mooney P."/>
            <person name="Moule S."/>
            <person name="Mungall K.L."/>
            <person name="Murphy L.D."/>
            <person name="Niblett D."/>
            <person name="Odell C."/>
            <person name="Oliver K."/>
            <person name="O'Neil S."/>
            <person name="Pearson D."/>
            <person name="Quail M.A."/>
            <person name="Rabbinowitsch E."/>
            <person name="Rutherford K.M."/>
            <person name="Rutter S."/>
            <person name="Saunders D."/>
            <person name="Seeger K."/>
            <person name="Sharp S."/>
            <person name="Skelton J."/>
            <person name="Simmonds M.N."/>
            <person name="Squares R."/>
            <person name="Squares S."/>
            <person name="Stevens K."/>
            <person name="Taylor K."/>
            <person name="Taylor R.G."/>
            <person name="Tivey A."/>
            <person name="Walsh S.V."/>
            <person name="Warren T."/>
            <person name="Whitehead S."/>
            <person name="Woodward J.R."/>
            <person name="Volckaert G."/>
            <person name="Aert R."/>
            <person name="Robben J."/>
            <person name="Grymonprez B."/>
            <person name="Weltjens I."/>
            <person name="Vanstreels E."/>
            <person name="Rieger M."/>
            <person name="Schaefer M."/>
            <person name="Mueller-Auer S."/>
            <person name="Gabel C."/>
            <person name="Fuchs M."/>
            <person name="Duesterhoeft A."/>
            <person name="Fritzc C."/>
            <person name="Holzer E."/>
            <person name="Moestl D."/>
            <person name="Hilbert H."/>
            <person name="Borzym K."/>
            <person name="Langer I."/>
            <person name="Beck A."/>
            <person name="Lehrach H."/>
            <person name="Reinhardt R."/>
            <person name="Pohl T.M."/>
            <person name="Eger P."/>
            <person name="Zimmermann W."/>
            <person name="Wedler H."/>
            <person name="Wambutt R."/>
            <person name="Purnelle B."/>
            <person name="Goffeau A."/>
            <person name="Cadieu E."/>
            <person name="Dreano S."/>
            <person name="Gloux S."/>
            <person name="Lelaure V."/>
            <person name="Mottier S."/>
            <person name="Galibert F."/>
            <person name="Aves S.J."/>
            <person name="Xiang Z."/>
            <person name="Hunt C."/>
            <person name="Moore K."/>
            <person name="Hurst S.M."/>
            <person name="Lucas M."/>
            <person name="Rochet M."/>
            <person name="Gaillardin C."/>
            <person name="Tallada V.A."/>
            <person name="Garzon A."/>
            <person name="Thode G."/>
            <person name="Daga R.R."/>
            <person name="Cruzado L."/>
            <person name="Jimenez J."/>
            <person name="Sanchez M."/>
            <person name="del Rey F."/>
            <person name="Benito J."/>
            <person name="Dominguez A."/>
            <person name="Revuelta J.L."/>
            <person name="Moreno S."/>
            <person name="Armstrong J."/>
            <person name="Forsburg S.L."/>
            <person name="Cerutti L."/>
            <person name="Lowe T."/>
            <person name="McCombie W.R."/>
            <person name="Paulsen I."/>
            <person name="Potashkin J."/>
            <person name="Shpakovski G.V."/>
            <person name="Ussery D."/>
            <person name="Barrell B.G."/>
            <person name="Nurse P."/>
        </authorList>
    </citation>
    <scope>NUCLEOTIDE SEQUENCE [LARGE SCALE GENOMIC DNA]</scope>
    <source>
        <strain>972 / ATCC 24843</strain>
    </source>
</reference>
<reference key="3">
    <citation type="journal article" date="2004" name="Curr. Biol.">
        <title>Microtubule nucleation at non-spindle pole body microtubule-organizing centers requires fission yeast centrosomin-related protein mod20p.</title>
        <authorList>
            <person name="Sawin K.E."/>
            <person name="Lourenco P.C.C."/>
            <person name="Snaith H.A."/>
        </authorList>
    </citation>
    <scope>INTERACTION WITH MBO1</scope>
</reference>
<reference key="4">
    <citation type="journal article" date="2005" name="Curr. Biol.">
        <title>Hrs1p/Mcp6p on the meiotic SPB organizes astral microtubule arrays for oscillatory nuclear movement.</title>
        <authorList>
            <person name="Tanaka K."/>
            <person name="Kohda T."/>
            <person name="Yamashita A."/>
            <person name="Nonaka N."/>
            <person name="Yamamoto M."/>
        </authorList>
    </citation>
    <scope>FUNCTION</scope>
    <scope>INTERACTION WITH ALP4 AND KMS1</scope>
    <scope>SUBCELLULAR LOCATION</scope>
</reference>
<reference key="5">
    <citation type="journal article" date="2006" name="Nat. Biotechnol.">
        <title>ORFeome cloning and global analysis of protein localization in the fission yeast Schizosaccharomyces pombe.</title>
        <authorList>
            <person name="Matsuyama A."/>
            <person name="Arai R."/>
            <person name="Yashiroda Y."/>
            <person name="Shirai A."/>
            <person name="Kamata A."/>
            <person name="Sekido S."/>
            <person name="Kobayashi Y."/>
            <person name="Hashimoto A."/>
            <person name="Hamamoto M."/>
            <person name="Hiraoka Y."/>
            <person name="Horinouchi S."/>
            <person name="Yoshida M."/>
        </authorList>
    </citation>
    <scope>SUBCELLULAR LOCATION [LARGE SCALE ANALYSIS]</scope>
</reference>
<gene>
    <name type="primary">mcp6</name>
    <name type="synonym">hrs1</name>
    <name type="synonym">mug3</name>
    <name type="ORF">SPBC582.06c</name>
</gene>
<evidence type="ECO:0000255" key="1"/>
<evidence type="ECO:0000256" key="2">
    <source>
        <dbReference type="SAM" id="MobiDB-lite"/>
    </source>
</evidence>
<evidence type="ECO:0000269" key="3">
    <source>
    </source>
</evidence>
<evidence type="ECO:0000269" key="4">
    <source>
    </source>
</evidence>
<evidence type="ECO:0000269" key="5">
    <source>
    </source>
</evidence>
<keyword id="KW-0175">Coiled coil</keyword>
<keyword id="KW-0963">Cytoplasm</keyword>
<keyword id="KW-0206">Cytoskeleton</keyword>
<keyword id="KW-0469">Meiosis</keyword>
<keyword id="KW-0539">Nucleus</keyword>
<keyword id="KW-1185">Reference proteome</keyword>
<proteinExistence type="evidence at protein level"/>
<sequence>MEYQEEASLASAEDSTFIASSPVQSVSEMKSIKQKSFQYFDDYEKNVSDKTIQFQKLQMTAKEIIDAFERDSTQRTLQIESLESKIGEQERDLNNEKLASETLREKTQLLEKENGALKVENGYLYEKSRKLEEEMAHLKKKCNVYKSKFEESSLRCKSLYSSNTKLKDSMETMKRRMETETKEMNKIKPKNDSESDRFKRNSQSLSQQSPLLDVHSPDNSNHRTMLNINNSSPIKPKKIFKPNEVKNRISRLQKTFADLENQHHSFQQICQTLRKRLENDSSTTKQRLSKLEEIIRNRAPPSYSFSLNCSHTYQPVSCVEPVNHDLS</sequence>
<comment type="function">
    <text evidence="4 5">Has a role in meiotic nuclear oscillation and recombination. Required to remodel astral microtubules into the 'horsetail' astral array maintaining the 'horsetail' nuclear movement. Promotes homologous paring of chromosomes during this movement.</text>
</comment>
<comment type="subunit">
    <text evidence="3 5">Interacts with alp4, kms1 and mbo1.</text>
</comment>
<comment type="interaction">
    <interactant intactId="EBI-1562149">
        <id>Q10336</id>
    </interactant>
    <interactant intactId="EBI-1562228">
        <id>Q9Y705</id>
        <label>alp4</label>
    </interactant>
    <organismsDiffer>false</organismsDiffer>
    <experiments>2</experiments>
</comment>
<comment type="interaction">
    <interactant intactId="EBI-1562149">
        <id>Q10336</id>
    </interactant>
    <interactant intactId="EBI-1542265">
        <id>P87245</id>
        <label>kms1</label>
    </interactant>
    <organismsDiffer>false</organismsDiffer>
    <experiments>2</experiments>
</comment>
<comment type="interaction">
    <interactant intactId="EBI-1562149">
        <id>Q10336</id>
    </interactant>
    <interactant intactId="EBI-1562149">
        <id>Q10336</id>
        <label>mcp6</label>
    </interactant>
    <organismsDiffer>false</organismsDiffer>
    <experiments>2</experiments>
</comment>
<comment type="subcellular location">
    <subcellularLocation>
        <location>Nucleus</location>
    </subcellularLocation>
    <subcellularLocation>
        <location>Cytoplasm</location>
        <location>Cytoskeleton</location>
        <location>Microtubule organizing center</location>
        <location>Spindle pole body</location>
    </subcellularLocation>
    <text>Localizes to the spindle pole body until the onset of meiosis I.</text>
</comment>
<organism>
    <name type="scientific">Schizosaccharomyces pombe (strain 972 / ATCC 24843)</name>
    <name type="common">Fission yeast</name>
    <dbReference type="NCBI Taxonomy" id="284812"/>
    <lineage>
        <taxon>Eukaryota</taxon>
        <taxon>Fungi</taxon>
        <taxon>Dikarya</taxon>
        <taxon>Ascomycota</taxon>
        <taxon>Taphrinomycotina</taxon>
        <taxon>Schizosaccharomycetes</taxon>
        <taxon>Schizosaccharomycetales</taxon>
        <taxon>Schizosaccharomycetaceae</taxon>
        <taxon>Schizosaccharomyces</taxon>
    </lineage>
</organism>
<protein>
    <recommendedName>
        <fullName>Meiotic coiled-coil protein 6</fullName>
    </recommendedName>
    <alternativeName>
        <fullName>Horsetail movement protein hrs1</fullName>
    </alternativeName>
    <alternativeName>
        <fullName>Meiotically up-regulated gene 3 protein</fullName>
    </alternativeName>
</protein>
<dbReference type="EMBL" id="AB189986">
    <property type="protein sequence ID" value="BAD42848.1"/>
    <property type="molecule type" value="Genomic_DNA"/>
</dbReference>
<dbReference type="EMBL" id="CU329671">
    <property type="protein sequence ID" value="CAB46669.1"/>
    <property type="molecule type" value="Genomic_DNA"/>
</dbReference>
<dbReference type="PIR" id="T37977">
    <property type="entry name" value="T37977"/>
</dbReference>
<dbReference type="RefSeq" id="NP_595174.1">
    <property type="nucleotide sequence ID" value="NM_001021082.1"/>
</dbReference>
<dbReference type="SMR" id="Q10336"/>
<dbReference type="BioGRID" id="277612">
    <property type="interactions" value="2"/>
</dbReference>
<dbReference type="FunCoup" id="Q10336">
    <property type="interactions" value="3"/>
</dbReference>
<dbReference type="IntAct" id="Q10336">
    <property type="interactions" value="4"/>
</dbReference>
<dbReference type="STRING" id="284812.Q10336"/>
<dbReference type="iPTMnet" id="Q10336"/>
<dbReference type="PaxDb" id="4896-SPBC582.06c.1"/>
<dbReference type="EnsemblFungi" id="SPBC582.06c.1">
    <property type="protein sequence ID" value="SPBC582.06c.1:pep"/>
    <property type="gene ID" value="SPBC582.06c"/>
</dbReference>
<dbReference type="GeneID" id="2541097"/>
<dbReference type="KEGG" id="spo:2541097"/>
<dbReference type="PomBase" id="SPBC582.06c">
    <property type="gene designation" value="mcp6"/>
</dbReference>
<dbReference type="VEuPathDB" id="FungiDB:SPBC582.06c"/>
<dbReference type="HOGENOM" id="CLU_850354_0_0_1"/>
<dbReference type="InParanoid" id="Q10336"/>
<dbReference type="OMA" id="FLKLQMN"/>
<dbReference type="PhylomeDB" id="Q10336"/>
<dbReference type="CD-CODE" id="576F0A76">
    <property type="entry name" value="Centrosome"/>
</dbReference>
<dbReference type="PRO" id="PR:Q10336"/>
<dbReference type="Proteomes" id="UP000002485">
    <property type="component" value="Chromosome II"/>
</dbReference>
<dbReference type="GO" id="GO:0005737">
    <property type="term" value="C:cytoplasm"/>
    <property type="evidence" value="ECO:0007669"/>
    <property type="project" value="UniProtKB-KW"/>
</dbReference>
<dbReference type="GO" id="GO:0035974">
    <property type="term" value="C:meiotic spindle pole body"/>
    <property type="evidence" value="ECO:0000314"/>
    <property type="project" value="PomBase"/>
</dbReference>
<dbReference type="GO" id="GO:0005634">
    <property type="term" value="C:nucleus"/>
    <property type="evidence" value="ECO:0007005"/>
    <property type="project" value="PomBase"/>
</dbReference>
<dbReference type="GO" id="GO:0042802">
    <property type="term" value="F:identical protein binding"/>
    <property type="evidence" value="ECO:0000353"/>
    <property type="project" value="IntAct"/>
</dbReference>
<dbReference type="GO" id="GO:0030989">
    <property type="term" value="P:dynein-driven meiotic oscillatory nuclear movement"/>
    <property type="evidence" value="ECO:0000315"/>
    <property type="project" value="PomBase"/>
</dbReference>
<dbReference type="GO" id="GO:0007129">
    <property type="term" value="P:homologous chromosome pairing at meiosis"/>
    <property type="evidence" value="ECO:0000315"/>
    <property type="project" value="PomBase"/>
</dbReference>
<dbReference type="GO" id="GO:0032118">
    <property type="term" value="P:horsetail-astral microtubule organization"/>
    <property type="evidence" value="ECO:0000315"/>
    <property type="project" value="PomBase"/>
</dbReference>
<dbReference type="SUPFAM" id="SSF57997">
    <property type="entry name" value="Tropomyosin"/>
    <property type="match status" value="1"/>
</dbReference>
<accession>Q10336</accession>
<name>MCP6_SCHPO</name>